<comment type="function">
    <text evidence="1">NDH-1 shuttles electrons from NADH, via FMN and iron-sulfur (Fe-S) centers, to quinones in the respiratory chain. The immediate electron acceptor for the enzyme in this species is believed to be ubiquinone. Couples the redox reaction to proton translocation (for every two electrons transferred, four hydrogen ions are translocated across the cytoplasmic membrane), and thus conserves the redox energy in a proton gradient.</text>
</comment>
<comment type="catalytic activity">
    <reaction evidence="1">
        <text>a quinone + NADH + 5 H(+)(in) = a quinol + NAD(+) + 4 H(+)(out)</text>
        <dbReference type="Rhea" id="RHEA:57888"/>
        <dbReference type="ChEBI" id="CHEBI:15378"/>
        <dbReference type="ChEBI" id="CHEBI:24646"/>
        <dbReference type="ChEBI" id="CHEBI:57540"/>
        <dbReference type="ChEBI" id="CHEBI:57945"/>
        <dbReference type="ChEBI" id="CHEBI:132124"/>
    </reaction>
</comment>
<comment type="subunit">
    <text evidence="1">NDH-1 is composed of 14 different subunits. Subunits NuoA, H, J, K, L, M, N constitute the membrane sector of the complex.</text>
</comment>
<comment type="subcellular location">
    <subcellularLocation>
        <location evidence="1">Cell inner membrane</location>
        <topology evidence="1">Multi-pass membrane protein</topology>
    </subcellularLocation>
</comment>
<comment type="similarity">
    <text evidence="1">Belongs to the complex I subunit 4L family.</text>
</comment>
<organism>
    <name type="scientific">Rhizobium etli (strain ATCC 51251 / DSM 11541 / JCM 21823 / NBRC 15573 / CFN 42)</name>
    <dbReference type="NCBI Taxonomy" id="347834"/>
    <lineage>
        <taxon>Bacteria</taxon>
        <taxon>Pseudomonadati</taxon>
        <taxon>Pseudomonadota</taxon>
        <taxon>Alphaproteobacteria</taxon>
        <taxon>Hyphomicrobiales</taxon>
        <taxon>Rhizobiaceae</taxon>
        <taxon>Rhizobium/Agrobacterium group</taxon>
        <taxon>Rhizobium</taxon>
    </lineage>
</organism>
<keyword id="KW-0997">Cell inner membrane</keyword>
<keyword id="KW-1003">Cell membrane</keyword>
<keyword id="KW-0472">Membrane</keyword>
<keyword id="KW-0520">NAD</keyword>
<keyword id="KW-0874">Quinone</keyword>
<keyword id="KW-1185">Reference proteome</keyword>
<keyword id="KW-1278">Translocase</keyword>
<keyword id="KW-0812">Transmembrane</keyword>
<keyword id="KW-1133">Transmembrane helix</keyword>
<keyword id="KW-0813">Transport</keyword>
<keyword id="KW-0830">Ubiquinone</keyword>
<gene>
    <name evidence="1" type="primary">nuoK2</name>
    <name type="ordered locus">RHE_CH03730</name>
</gene>
<name>NUOK2_RHIEC</name>
<protein>
    <recommendedName>
        <fullName evidence="1">NADH-quinone oxidoreductase subunit K 2</fullName>
        <ecNumber evidence="1">7.1.1.-</ecNumber>
    </recommendedName>
    <alternativeName>
        <fullName evidence="1">NADH dehydrogenase I subunit K 2</fullName>
    </alternativeName>
    <alternativeName>
        <fullName evidence="1">NDH-1 subunit K 2</fullName>
    </alternativeName>
</protein>
<proteinExistence type="inferred from homology"/>
<reference key="1">
    <citation type="journal article" date="2006" name="Proc. Natl. Acad. Sci. U.S.A.">
        <title>The partitioned Rhizobium etli genome: genetic and metabolic redundancy in seven interacting replicons.</title>
        <authorList>
            <person name="Gonzalez V."/>
            <person name="Santamaria R.I."/>
            <person name="Bustos P."/>
            <person name="Hernandez-Gonzalez I."/>
            <person name="Medrano-Soto A."/>
            <person name="Moreno-Hagelsieb G."/>
            <person name="Janga S.C."/>
            <person name="Ramirez M.A."/>
            <person name="Jimenez-Jacinto V."/>
            <person name="Collado-Vides J."/>
            <person name="Davila G."/>
        </authorList>
    </citation>
    <scope>NUCLEOTIDE SEQUENCE [LARGE SCALE GENOMIC DNA]</scope>
    <source>
        <strain>ATCC 51251 / DSM 11541 / JCM 21823 / NBRC 15573 / CFN 42</strain>
    </source>
</reference>
<sequence length="100" mass="11038">MVPLWWYIVLGVVLFVIGAAGVLIRRNILVVLMSLELLLNSVNINFIAFGHYYDDFRGQIFAIFVIAITAAEVAVALGILVALVRNKSTLKVDDVTMMKG</sequence>
<dbReference type="EC" id="7.1.1.-" evidence="1"/>
<dbReference type="EMBL" id="CP000133">
    <property type="protein sequence ID" value="ABC92485.1"/>
    <property type="molecule type" value="Genomic_DNA"/>
</dbReference>
<dbReference type="SMR" id="Q2K3V1"/>
<dbReference type="KEGG" id="ret:RHE_CH03730"/>
<dbReference type="eggNOG" id="COG0713">
    <property type="taxonomic scope" value="Bacteria"/>
</dbReference>
<dbReference type="HOGENOM" id="CLU_144724_0_0_5"/>
<dbReference type="Proteomes" id="UP000001936">
    <property type="component" value="Chromosome"/>
</dbReference>
<dbReference type="GO" id="GO:0030964">
    <property type="term" value="C:NADH dehydrogenase complex"/>
    <property type="evidence" value="ECO:0007669"/>
    <property type="project" value="TreeGrafter"/>
</dbReference>
<dbReference type="GO" id="GO:0005886">
    <property type="term" value="C:plasma membrane"/>
    <property type="evidence" value="ECO:0007669"/>
    <property type="project" value="UniProtKB-SubCell"/>
</dbReference>
<dbReference type="GO" id="GO:0050136">
    <property type="term" value="F:NADH:ubiquinone reductase (non-electrogenic) activity"/>
    <property type="evidence" value="ECO:0007669"/>
    <property type="project" value="UniProtKB-UniRule"/>
</dbReference>
<dbReference type="GO" id="GO:0048038">
    <property type="term" value="F:quinone binding"/>
    <property type="evidence" value="ECO:0007669"/>
    <property type="project" value="UniProtKB-KW"/>
</dbReference>
<dbReference type="GO" id="GO:0042773">
    <property type="term" value="P:ATP synthesis coupled electron transport"/>
    <property type="evidence" value="ECO:0007669"/>
    <property type="project" value="InterPro"/>
</dbReference>
<dbReference type="FunFam" id="1.10.287.3510:FF:000001">
    <property type="entry name" value="NADH-quinone oxidoreductase subunit K"/>
    <property type="match status" value="1"/>
</dbReference>
<dbReference type="Gene3D" id="1.10.287.3510">
    <property type="match status" value="1"/>
</dbReference>
<dbReference type="HAMAP" id="MF_01456">
    <property type="entry name" value="NDH1_NuoK"/>
    <property type="match status" value="1"/>
</dbReference>
<dbReference type="InterPro" id="IPR001133">
    <property type="entry name" value="NADH_UbQ_OxRdtase_chain4L/K"/>
</dbReference>
<dbReference type="InterPro" id="IPR039428">
    <property type="entry name" value="NUOK/Mnh_C1-like"/>
</dbReference>
<dbReference type="NCBIfam" id="NF004320">
    <property type="entry name" value="PRK05715.1-2"/>
    <property type="match status" value="1"/>
</dbReference>
<dbReference type="NCBIfam" id="NF004321">
    <property type="entry name" value="PRK05715.1-3"/>
    <property type="match status" value="1"/>
</dbReference>
<dbReference type="NCBIfam" id="NF004323">
    <property type="entry name" value="PRK05715.1-5"/>
    <property type="match status" value="1"/>
</dbReference>
<dbReference type="PANTHER" id="PTHR11434:SF16">
    <property type="entry name" value="NADH-UBIQUINONE OXIDOREDUCTASE CHAIN 4L"/>
    <property type="match status" value="1"/>
</dbReference>
<dbReference type="PANTHER" id="PTHR11434">
    <property type="entry name" value="NADH-UBIQUINONE OXIDOREDUCTASE SUBUNIT ND4L"/>
    <property type="match status" value="1"/>
</dbReference>
<dbReference type="Pfam" id="PF00420">
    <property type="entry name" value="Oxidored_q2"/>
    <property type="match status" value="1"/>
</dbReference>
<accession>Q2K3V1</accession>
<feature type="chain" id="PRO_0000390187" description="NADH-quinone oxidoreductase subunit K 2">
    <location>
        <begin position="1"/>
        <end position="100"/>
    </location>
</feature>
<feature type="transmembrane region" description="Helical" evidence="1">
    <location>
        <begin position="4"/>
        <end position="24"/>
    </location>
</feature>
<feature type="transmembrane region" description="Helical" evidence="1">
    <location>
        <begin position="28"/>
        <end position="48"/>
    </location>
</feature>
<feature type="transmembrane region" description="Helical" evidence="1">
    <location>
        <begin position="60"/>
        <end position="80"/>
    </location>
</feature>
<evidence type="ECO:0000255" key="1">
    <source>
        <dbReference type="HAMAP-Rule" id="MF_01456"/>
    </source>
</evidence>